<accession>Q24323</accession>
<accession>Q0E954</accession>
<accession>Q6NN47</accession>
<accession>Q7KRC9</accession>
<accession>Q8MLF1</accession>
<accession>Q9V7Q7</accession>
<feature type="signal peptide" evidence="2">
    <location>
        <begin position="1"/>
        <end position="25"/>
    </location>
</feature>
<feature type="chain" id="PRO_0000032301" description="Semaphorin-2A">
    <location>
        <begin position="26"/>
        <end position="724"/>
    </location>
</feature>
<feature type="domain" description="Sema" evidence="3">
    <location>
        <begin position="45"/>
        <end position="522"/>
    </location>
</feature>
<feature type="domain" description="Ig-like C2-type">
    <location>
        <begin position="552"/>
        <end position="663"/>
    </location>
</feature>
<feature type="glycosylation site" description="N-linked (GlcNAc...) asparagine" evidence="5">
    <location>
        <position position="95"/>
    </location>
</feature>
<feature type="glycosylation site" description="N-linked (GlcNAc...) asparagine" evidence="2">
    <location>
        <position position="163"/>
    </location>
</feature>
<feature type="glycosylation site" description="N-linked (GlcNAc...) asparagine" evidence="2">
    <location>
        <position position="190"/>
    </location>
</feature>
<feature type="glycosylation site" description="N-linked (GlcNAc...) asparagine" evidence="2">
    <location>
        <position position="229"/>
    </location>
</feature>
<feature type="glycosylation site" description="N-linked (GlcNAc...) asparagine" evidence="2">
    <location>
        <position position="314"/>
    </location>
</feature>
<feature type="glycosylation site" description="N-linked (GlcNAc...) asparagine" evidence="2">
    <location>
        <position position="401"/>
    </location>
</feature>
<feature type="glycosylation site" description="N-linked (GlcNAc...) asparagine" evidence="2">
    <location>
        <position position="563"/>
    </location>
</feature>
<feature type="glycosylation site" description="N-linked (GlcNAc...) asparagine" evidence="2">
    <location>
        <position position="658"/>
    </location>
</feature>
<feature type="glycosylation site" description="N-linked (GlcNAc...) asparagine" evidence="2">
    <location>
        <position position="670"/>
    </location>
</feature>
<feature type="glycosylation site" description="N-linked (GlcNAc...) asparagine" evidence="2">
    <location>
        <position position="708"/>
    </location>
</feature>
<feature type="disulfide bond" evidence="1">
    <location>
        <begin position="118"/>
        <end position="129"/>
    </location>
</feature>
<feature type="disulfide bond" evidence="1">
    <location>
        <begin position="291"/>
        <end position="399"/>
    </location>
</feature>
<feature type="disulfide bond" evidence="1">
    <location>
        <begin position="315"/>
        <end position="358"/>
    </location>
</feature>
<feature type="disulfide bond" evidence="1">
    <location>
        <begin position="525"/>
        <end position="541"/>
    </location>
</feature>
<feature type="disulfide bond" evidence="1">
    <location>
        <begin position="535"/>
        <end position="550"/>
    </location>
</feature>
<feature type="disulfide bond" evidence="1">
    <location>
        <begin position="590"/>
        <end position="647"/>
    </location>
</feature>
<feature type="splice variant" id="VSP_016075" description="In isoform C." evidence="11">
    <original>MSLLQLSPLLALLLLLCSSVSETAADYENTWNFYYERPCCTGNDQGNNNYGKHGA</original>
    <variation>MNGIHWLLFGSCLMLISQIEAVTEELSP</variation>
    <location>
        <begin position="1"/>
        <end position="55"/>
    </location>
</feature>
<feature type="splice variant" id="VSP_016076" description="In isoform D." evidence="11">
    <location>
        <begin position="103"/>
        <end position="125"/>
    </location>
</feature>
<feature type="splice variant" id="VSP_016077" description="In isoform E." evidence="10">
    <location>
        <begin position="110"/>
        <end position="127"/>
    </location>
</feature>
<feature type="sequence conflict" description="In Ref. 1; AAC37187." evidence="11" ref="1">
    <original>V</original>
    <variation>A</variation>
    <location>
        <position position="105"/>
    </location>
</feature>
<feature type="sequence conflict" description="In Ref. 5; AAR99105." evidence="11" ref="5">
    <original>P</original>
    <variation>S</variation>
    <location>
        <position position="110"/>
    </location>
</feature>
<feature type="sequence conflict" description="In Ref. 1; AAC37187." evidence="11" ref="1">
    <original>A</original>
    <variation>G</variation>
    <location>
        <position position="701"/>
    </location>
</feature>
<feature type="sequence conflict" description="In Ref. 1; AAC37187." evidence="11" ref="1">
    <original>S</original>
    <variation>C</variation>
    <location>
        <position position="711"/>
    </location>
</feature>
<feature type="strand" evidence="13">
    <location>
        <begin position="31"/>
        <end position="34"/>
    </location>
</feature>
<feature type="strand" evidence="13">
    <location>
        <begin position="59"/>
        <end position="61"/>
    </location>
</feature>
<feature type="strand" evidence="13">
    <location>
        <begin position="63"/>
        <end position="65"/>
    </location>
</feature>
<feature type="strand" evidence="13">
    <location>
        <begin position="70"/>
        <end position="74"/>
    </location>
</feature>
<feature type="helix" evidence="13">
    <location>
        <begin position="75"/>
        <end position="77"/>
    </location>
</feature>
<feature type="strand" evidence="13">
    <location>
        <begin position="79"/>
        <end position="85"/>
    </location>
</feature>
<feature type="strand" evidence="13">
    <location>
        <begin position="87"/>
        <end position="94"/>
    </location>
</feature>
<feature type="helix" evidence="13">
    <location>
        <begin position="96"/>
        <end position="98"/>
    </location>
</feature>
<feature type="turn" evidence="13">
    <location>
        <begin position="101"/>
        <end position="103"/>
    </location>
</feature>
<feature type="strand" evidence="13">
    <location>
        <begin position="104"/>
        <end position="107"/>
    </location>
</feature>
<feature type="helix" evidence="13">
    <location>
        <begin position="112"/>
        <end position="120"/>
    </location>
</feature>
<feature type="turn" evidence="13">
    <location>
        <begin position="125"/>
        <end position="129"/>
    </location>
</feature>
<feature type="strand" evidence="13">
    <location>
        <begin position="132"/>
        <end position="139"/>
    </location>
</feature>
<feature type="turn" evidence="13">
    <location>
        <begin position="140"/>
        <end position="143"/>
    </location>
</feature>
<feature type="strand" evidence="13">
    <location>
        <begin position="144"/>
        <end position="149"/>
    </location>
</feature>
<feature type="turn" evidence="13">
    <location>
        <begin position="151"/>
        <end position="153"/>
    </location>
</feature>
<feature type="strand" evidence="13">
    <location>
        <begin position="156"/>
        <end position="161"/>
    </location>
</feature>
<feature type="helix" evidence="13">
    <location>
        <begin position="169"/>
        <end position="171"/>
    </location>
</feature>
<feature type="turn" evidence="13">
    <location>
        <begin position="180"/>
        <end position="182"/>
    </location>
</feature>
<feature type="strand" evidence="13">
    <location>
        <begin position="192"/>
        <end position="196"/>
    </location>
</feature>
<feature type="strand" evidence="13">
    <location>
        <begin position="198"/>
        <end position="200"/>
    </location>
</feature>
<feature type="helix" evidence="13">
    <location>
        <begin position="201"/>
        <end position="203"/>
    </location>
</feature>
<feature type="strand" evidence="13">
    <location>
        <begin position="206"/>
        <end position="212"/>
    </location>
</feature>
<feature type="strand" evidence="13">
    <location>
        <begin position="220"/>
        <end position="224"/>
    </location>
</feature>
<feature type="strand" evidence="13">
    <location>
        <begin position="227"/>
        <end position="229"/>
    </location>
</feature>
<feature type="turn" evidence="13">
    <location>
        <begin position="230"/>
        <end position="233"/>
    </location>
</feature>
<feature type="strand" evidence="13">
    <location>
        <begin position="234"/>
        <end position="237"/>
    </location>
</feature>
<feature type="turn" evidence="13">
    <location>
        <begin position="247"/>
        <end position="249"/>
    </location>
</feature>
<feature type="strand" evidence="13">
    <location>
        <begin position="254"/>
        <end position="261"/>
    </location>
</feature>
<feature type="strand" evidence="13">
    <location>
        <begin position="264"/>
        <end position="272"/>
    </location>
</feature>
<feature type="helix" evidence="13">
    <location>
        <begin position="274"/>
        <end position="276"/>
    </location>
</feature>
<feature type="turn" evidence="13">
    <location>
        <begin position="277"/>
        <end position="279"/>
    </location>
</feature>
<feature type="strand" evidence="13">
    <location>
        <begin position="283"/>
        <end position="291"/>
    </location>
</feature>
<feature type="turn" evidence="13">
    <location>
        <begin position="300"/>
        <end position="303"/>
    </location>
</feature>
<feature type="strand" evidence="13">
    <location>
        <begin position="309"/>
        <end position="313"/>
    </location>
</feature>
<feature type="strand" evidence="13">
    <location>
        <begin position="319"/>
        <end position="321"/>
    </location>
</feature>
<feature type="strand" evidence="13">
    <location>
        <begin position="327"/>
        <end position="332"/>
    </location>
</feature>
<feature type="strand" evidence="13">
    <location>
        <begin position="340"/>
        <end position="346"/>
    </location>
</feature>
<feature type="strand" evidence="13">
    <location>
        <begin position="350"/>
        <end position="352"/>
    </location>
</feature>
<feature type="strand" evidence="13">
    <location>
        <begin position="354"/>
        <end position="361"/>
    </location>
</feature>
<feature type="helix" evidence="13">
    <location>
        <begin position="362"/>
        <end position="370"/>
    </location>
</feature>
<feature type="strand" evidence="13">
    <location>
        <begin position="373"/>
        <end position="376"/>
    </location>
</feature>
<feature type="strand" evidence="13">
    <location>
        <begin position="383"/>
        <end position="386"/>
    </location>
</feature>
<feature type="helix" evidence="13">
    <location>
        <begin position="388"/>
        <end position="390"/>
    </location>
</feature>
<feature type="helix" evidence="13">
    <location>
        <begin position="403"/>
        <end position="405"/>
    </location>
</feature>
<feature type="helix" evidence="13">
    <location>
        <begin position="408"/>
        <end position="416"/>
    </location>
</feature>
<feature type="strand" evidence="13">
    <location>
        <begin position="419"/>
        <end position="422"/>
    </location>
</feature>
<feature type="strand" evidence="13">
    <location>
        <begin position="427"/>
        <end position="430"/>
    </location>
</feature>
<feature type="strand" evidence="13">
    <location>
        <begin position="432"/>
        <end position="436"/>
    </location>
</feature>
<feature type="strand" evidence="13">
    <location>
        <begin position="440"/>
        <end position="450"/>
    </location>
</feature>
<feature type="turn" evidence="13">
    <location>
        <begin position="451"/>
        <end position="454"/>
    </location>
</feature>
<feature type="strand" evidence="13">
    <location>
        <begin position="455"/>
        <end position="464"/>
    </location>
</feature>
<feature type="strand" evidence="13">
    <location>
        <begin position="467"/>
        <end position="477"/>
    </location>
</feature>
<feature type="strand" evidence="13">
    <location>
        <begin position="480"/>
        <end position="490"/>
    </location>
</feature>
<feature type="strand" evidence="13">
    <location>
        <begin position="499"/>
        <end position="503"/>
    </location>
</feature>
<feature type="turn" evidence="13">
    <location>
        <begin position="504"/>
        <end position="507"/>
    </location>
</feature>
<feature type="strand" evidence="13">
    <location>
        <begin position="508"/>
        <end position="512"/>
    </location>
</feature>
<feature type="strand" evidence="13">
    <location>
        <begin position="517"/>
        <end position="522"/>
    </location>
</feature>
<feature type="helix" evidence="13">
    <location>
        <begin position="525"/>
        <end position="528"/>
    </location>
</feature>
<feature type="helix" evidence="13">
    <location>
        <begin position="532"/>
        <end position="535"/>
    </location>
</feature>
<feature type="strand" evidence="13">
    <location>
        <begin position="541"/>
        <end position="544"/>
    </location>
</feature>
<feature type="turn" evidence="13">
    <location>
        <begin position="545"/>
        <end position="548"/>
    </location>
</feature>
<feature type="strand" evidence="13">
    <location>
        <begin position="549"/>
        <end position="552"/>
    </location>
</feature>
<feature type="turn" evidence="13">
    <location>
        <begin position="566"/>
        <end position="569"/>
    </location>
</feature>
<feature type="helix" evidence="13">
    <location>
        <begin position="570"/>
        <end position="572"/>
    </location>
</feature>
<feature type="strand" evidence="13">
    <location>
        <begin position="575"/>
        <end position="581"/>
    </location>
</feature>
<feature type="strand" evidence="13">
    <location>
        <begin position="586"/>
        <end position="593"/>
    </location>
</feature>
<feature type="helix" evidence="13">
    <location>
        <begin position="596"/>
        <end position="598"/>
    </location>
</feature>
<feature type="strand" evidence="13">
    <location>
        <begin position="603"/>
        <end position="609"/>
    </location>
</feature>
<feature type="turn" evidence="13">
    <location>
        <begin position="610"/>
        <end position="612"/>
    </location>
</feature>
<feature type="strand" evidence="13">
    <location>
        <begin position="613"/>
        <end position="616"/>
    </location>
</feature>
<feature type="strand" evidence="13">
    <location>
        <begin position="621"/>
        <end position="627"/>
    </location>
</feature>
<feature type="strand" evidence="13">
    <location>
        <begin position="632"/>
        <end position="634"/>
    </location>
</feature>
<feature type="helix" evidence="13">
    <location>
        <begin position="639"/>
        <end position="641"/>
    </location>
</feature>
<feature type="strand" evidence="13">
    <location>
        <begin position="643"/>
        <end position="649"/>
    </location>
</feature>
<feature type="strand" evidence="13">
    <location>
        <begin position="652"/>
        <end position="662"/>
    </location>
</feature>
<gene>
    <name evidence="12" type="primary">Sema2a</name>
    <name evidence="9" type="synonym">Sema-2a</name>
    <name evidence="12" type="ORF">CG4700</name>
</gene>
<dbReference type="EMBL" id="L26083">
    <property type="protein sequence ID" value="AAC37187.1"/>
    <property type="molecule type" value="mRNA"/>
</dbReference>
<dbReference type="EMBL" id="AE013599">
    <property type="protein sequence ID" value="AAF57989.1"/>
    <property type="molecule type" value="Genomic_DNA"/>
</dbReference>
<dbReference type="EMBL" id="AE013599">
    <property type="protein sequence ID" value="AAM68500.1"/>
    <property type="molecule type" value="Genomic_DNA"/>
</dbReference>
<dbReference type="EMBL" id="AE013599">
    <property type="protein sequence ID" value="AAS64837.1"/>
    <property type="molecule type" value="Genomic_DNA"/>
</dbReference>
<dbReference type="EMBL" id="AY095026">
    <property type="protein sequence ID" value="AAM11354.1"/>
    <property type="molecule type" value="mRNA"/>
</dbReference>
<dbReference type="EMBL" id="AY128437">
    <property type="protein sequence ID" value="AAM75030.1"/>
    <property type="molecule type" value="mRNA"/>
</dbReference>
<dbReference type="EMBL" id="BT011447">
    <property type="protein sequence ID" value="AAR99105.1"/>
    <property type="molecule type" value="mRNA"/>
</dbReference>
<dbReference type="PIR" id="C49423">
    <property type="entry name" value="C49423"/>
</dbReference>
<dbReference type="RefSeq" id="NP_477507.1">
    <molecule id="Q24323-1"/>
    <property type="nucleotide sequence ID" value="NM_058159.5"/>
</dbReference>
<dbReference type="RefSeq" id="NP_599130.1">
    <molecule id="Q24323-1"/>
    <property type="nucleotide sequence ID" value="NM_134303.4"/>
</dbReference>
<dbReference type="RefSeq" id="NP_725586.1">
    <molecule id="Q24323-2"/>
    <property type="nucleotide sequence ID" value="NM_166178.3"/>
</dbReference>
<dbReference type="RefSeq" id="NP_995856.2">
    <molecule id="Q24323-1"/>
    <property type="nucleotide sequence ID" value="NM_206134.2"/>
</dbReference>
<dbReference type="PDB" id="6QP7">
    <property type="method" value="X-ray"/>
    <property type="resolution" value="1.96 A"/>
    <property type="chains" value="A/B=27-671"/>
</dbReference>
<dbReference type="PDBsum" id="6QP7"/>
<dbReference type="SMR" id="Q24323"/>
<dbReference type="BioGRID" id="62559">
    <property type="interactions" value="23"/>
</dbReference>
<dbReference type="FunCoup" id="Q24323">
    <property type="interactions" value="237"/>
</dbReference>
<dbReference type="IntAct" id="Q24323">
    <property type="interactions" value="58"/>
</dbReference>
<dbReference type="STRING" id="7227.FBpp0086238"/>
<dbReference type="GlyCosmos" id="Q24323">
    <property type="glycosylation" value="10 sites, No reported glycans"/>
</dbReference>
<dbReference type="GlyGen" id="Q24323">
    <property type="glycosylation" value="10 sites"/>
</dbReference>
<dbReference type="iPTMnet" id="Q24323"/>
<dbReference type="PaxDb" id="7227-FBpp0086237"/>
<dbReference type="DNASU" id="36846"/>
<dbReference type="EnsemblMetazoa" id="FBtr0087088">
    <molecule id="Q24323-2"/>
    <property type="protein sequence ID" value="FBpp0086236"/>
    <property type="gene ID" value="FBgn0011260"/>
</dbReference>
<dbReference type="EnsemblMetazoa" id="FBtr0087089">
    <molecule id="Q24323-1"/>
    <property type="protein sequence ID" value="FBpp0086237"/>
    <property type="gene ID" value="FBgn0011260"/>
</dbReference>
<dbReference type="EnsemblMetazoa" id="FBtr0087090">
    <molecule id="Q24323-1"/>
    <property type="protein sequence ID" value="FBpp0086238"/>
    <property type="gene ID" value="FBgn0011260"/>
</dbReference>
<dbReference type="EnsemblMetazoa" id="FBtr0345339">
    <molecule id="Q24323-1"/>
    <property type="protein sequence ID" value="FBpp0311494"/>
    <property type="gene ID" value="FBgn0011260"/>
</dbReference>
<dbReference type="GeneID" id="36846"/>
<dbReference type="KEGG" id="dme:Dmel_CG4700"/>
<dbReference type="AGR" id="FB:FBgn0011260"/>
<dbReference type="CTD" id="36846"/>
<dbReference type="FlyBase" id="FBgn0011260">
    <property type="gene designation" value="Sema2a"/>
</dbReference>
<dbReference type="VEuPathDB" id="VectorBase:FBgn0011260"/>
<dbReference type="eggNOG" id="KOG3611">
    <property type="taxonomic scope" value="Eukaryota"/>
</dbReference>
<dbReference type="GeneTree" id="ENSGT00940000172789"/>
<dbReference type="InParanoid" id="Q24323"/>
<dbReference type="OMA" id="WAYNIND"/>
<dbReference type="OrthoDB" id="9988752at2759"/>
<dbReference type="PhylomeDB" id="Q24323"/>
<dbReference type="Reactome" id="R-DME-399954">
    <property type="pathway name" value="Sema3A PAK dependent Axon repulsion"/>
</dbReference>
<dbReference type="Reactome" id="R-DME-399955">
    <property type="pathway name" value="SEMA3A-Plexin repulsion signaling by inhibiting Integrin adhesion"/>
</dbReference>
<dbReference type="Reactome" id="R-DME-399956">
    <property type="pathway name" value="CRMPs in Sema3A signaling"/>
</dbReference>
<dbReference type="Reactome" id="R-DME-416572">
    <property type="pathway name" value="Sema4D induced cell migration and growth-cone collapse"/>
</dbReference>
<dbReference type="Reactome" id="R-DME-416700">
    <property type="pathway name" value="Other semaphorin interactions"/>
</dbReference>
<dbReference type="SignaLink" id="Q24323"/>
<dbReference type="BioGRID-ORCS" id="36846">
    <property type="hits" value="0 hits in 3 CRISPR screens"/>
</dbReference>
<dbReference type="ChiTaRS" id="Sema-2a">
    <property type="organism name" value="fly"/>
</dbReference>
<dbReference type="GenomeRNAi" id="36846"/>
<dbReference type="PRO" id="PR:Q24323"/>
<dbReference type="Proteomes" id="UP000000803">
    <property type="component" value="Chromosome 2R"/>
</dbReference>
<dbReference type="Bgee" id="FBgn0011260">
    <property type="expression patterns" value="Expressed in wing disc and 172 other cell types or tissues"/>
</dbReference>
<dbReference type="ExpressionAtlas" id="Q24323">
    <property type="expression patterns" value="baseline and differential"/>
</dbReference>
<dbReference type="GO" id="GO:0005829">
    <property type="term" value="C:cytosol"/>
    <property type="evidence" value="ECO:0007005"/>
    <property type="project" value="FlyBase"/>
</dbReference>
<dbReference type="GO" id="GO:0012505">
    <property type="term" value="C:endomembrane system"/>
    <property type="evidence" value="ECO:0007005"/>
    <property type="project" value="FlyBase"/>
</dbReference>
<dbReference type="GO" id="GO:0005576">
    <property type="term" value="C:extracellular region"/>
    <property type="evidence" value="ECO:0000250"/>
    <property type="project" value="FlyBase"/>
</dbReference>
<dbReference type="GO" id="GO:0005886">
    <property type="term" value="C:plasma membrane"/>
    <property type="evidence" value="ECO:0000318"/>
    <property type="project" value="GO_Central"/>
</dbReference>
<dbReference type="GO" id="GO:0045499">
    <property type="term" value="F:chemorepellent activity"/>
    <property type="evidence" value="ECO:0000318"/>
    <property type="project" value="GO_Central"/>
</dbReference>
<dbReference type="GO" id="GO:0030215">
    <property type="term" value="F:semaphorin receptor binding"/>
    <property type="evidence" value="ECO:0000318"/>
    <property type="project" value="GO_Central"/>
</dbReference>
<dbReference type="GO" id="GO:0030534">
    <property type="term" value="P:adult behavior"/>
    <property type="evidence" value="ECO:0000315"/>
    <property type="project" value="FlyBase"/>
</dbReference>
<dbReference type="GO" id="GO:0007411">
    <property type="term" value="P:axon guidance"/>
    <property type="evidence" value="ECO:0000315"/>
    <property type="project" value="FlyBase"/>
</dbReference>
<dbReference type="GO" id="GO:0070983">
    <property type="term" value="P:dendrite guidance"/>
    <property type="evidence" value="ECO:0000316"/>
    <property type="project" value="FlyBase"/>
</dbReference>
<dbReference type="GO" id="GO:0042756">
    <property type="term" value="P:drinking behavior"/>
    <property type="evidence" value="ECO:0000315"/>
    <property type="project" value="FlyBase"/>
</dbReference>
<dbReference type="GO" id="GO:0007629">
    <property type="term" value="P:flight behavior"/>
    <property type="evidence" value="ECO:0000315"/>
    <property type="project" value="FlyBase"/>
</dbReference>
<dbReference type="GO" id="GO:0050919">
    <property type="term" value="P:negative chemotaxis"/>
    <property type="evidence" value="ECO:0000318"/>
    <property type="project" value="GO_Central"/>
</dbReference>
<dbReference type="GO" id="GO:0071678">
    <property type="term" value="P:olfactory bulb axon guidance"/>
    <property type="evidence" value="ECO:0000315"/>
    <property type="project" value="FlyBase"/>
</dbReference>
<dbReference type="GO" id="GO:0030335">
    <property type="term" value="P:positive regulation of cell migration"/>
    <property type="evidence" value="ECO:0000318"/>
    <property type="project" value="GO_Central"/>
</dbReference>
<dbReference type="GO" id="GO:0071526">
    <property type="term" value="P:semaphorin-plexin signaling pathway"/>
    <property type="evidence" value="ECO:0000318"/>
    <property type="project" value="GO_Central"/>
</dbReference>
<dbReference type="GO" id="GO:0097374">
    <property type="term" value="P:sensory neuron axon guidance"/>
    <property type="evidence" value="ECO:0000315"/>
    <property type="project" value="FlyBase"/>
</dbReference>
<dbReference type="GO" id="GO:0016201">
    <property type="term" value="P:synaptic target inhibition"/>
    <property type="evidence" value="ECO:0000315"/>
    <property type="project" value="FlyBase"/>
</dbReference>
<dbReference type="GO" id="GO:0007632">
    <property type="term" value="P:visual behavior"/>
    <property type="evidence" value="ECO:0000315"/>
    <property type="project" value="FlyBase"/>
</dbReference>
<dbReference type="CDD" id="cd04979">
    <property type="entry name" value="Ig_Semaphorin_C"/>
    <property type="match status" value="1"/>
</dbReference>
<dbReference type="CDD" id="cd11238">
    <property type="entry name" value="Sema_2A"/>
    <property type="match status" value="1"/>
</dbReference>
<dbReference type="FunFam" id="2.130.10.10:FF:000369">
    <property type="entry name" value="semaphorin-2A isoform X1"/>
    <property type="match status" value="1"/>
</dbReference>
<dbReference type="FunFam" id="2.60.40.10:FF:001506">
    <property type="entry name" value="semaphorin-2A isoform X1"/>
    <property type="match status" value="1"/>
</dbReference>
<dbReference type="FunFam" id="3.30.1680.10:FF:000024">
    <property type="entry name" value="semaphorin-2A isoform X1"/>
    <property type="match status" value="1"/>
</dbReference>
<dbReference type="Gene3D" id="2.60.40.10">
    <property type="entry name" value="Immunoglobulins"/>
    <property type="match status" value="1"/>
</dbReference>
<dbReference type="Gene3D" id="3.30.1680.10">
    <property type="entry name" value="ligand-binding face of the semaphorins, domain 2"/>
    <property type="match status" value="1"/>
</dbReference>
<dbReference type="Gene3D" id="2.130.10.10">
    <property type="entry name" value="YVTN repeat-like/Quinoprotein amine dehydrogenase"/>
    <property type="match status" value="1"/>
</dbReference>
<dbReference type="InterPro" id="IPR007110">
    <property type="entry name" value="Ig-like_dom"/>
</dbReference>
<dbReference type="InterPro" id="IPR036179">
    <property type="entry name" value="Ig-like_dom_sf"/>
</dbReference>
<dbReference type="InterPro" id="IPR013783">
    <property type="entry name" value="Ig-like_fold"/>
</dbReference>
<dbReference type="InterPro" id="IPR003599">
    <property type="entry name" value="Ig_sub"/>
</dbReference>
<dbReference type="InterPro" id="IPR001627">
    <property type="entry name" value="Semap_dom"/>
</dbReference>
<dbReference type="InterPro" id="IPR036352">
    <property type="entry name" value="Semap_dom_sf"/>
</dbReference>
<dbReference type="InterPro" id="IPR027231">
    <property type="entry name" value="Semaphorin"/>
</dbReference>
<dbReference type="InterPro" id="IPR015943">
    <property type="entry name" value="WD40/YVTN_repeat-like_dom_sf"/>
</dbReference>
<dbReference type="PANTHER" id="PTHR11036">
    <property type="entry name" value="SEMAPHORIN"/>
    <property type="match status" value="1"/>
</dbReference>
<dbReference type="PANTHER" id="PTHR11036:SF90">
    <property type="entry name" value="SEMAPHORIN 2B, ISOFORM D-RELATED"/>
    <property type="match status" value="1"/>
</dbReference>
<dbReference type="Pfam" id="PF01403">
    <property type="entry name" value="Sema"/>
    <property type="match status" value="1"/>
</dbReference>
<dbReference type="SMART" id="SM00409">
    <property type="entry name" value="IG"/>
    <property type="match status" value="1"/>
</dbReference>
<dbReference type="SMART" id="SM00630">
    <property type="entry name" value="Sema"/>
    <property type="match status" value="1"/>
</dbReference>
<dbReference type="SUPFAM" id="SSF48726">
    <property type="entry name" value="Immunoglobulin"/>
    <property type="match status" value="1"/>
</dbReference>
<dbReference type="SUPFAM" id="SSF103575">
    <property type="entry name" value="Plexin repeat"/>
    <property type="match status" value="1"/>
</dbReference>
<dbReference type="SUPFAM" id="SSF101912">
    <property type="entry name" value="Sema domain"/>
    <property type="match status" value="1"/>
</dbReference>
<dbReference type="PROSITE" id="PS50835">
    <property type="entry name" value="IG_LIKE"/>
    <property type="match status" value="1"/>
</dbReference>
<dbReference type="PROSITE" id="PS51004">
    <property type="entry name" value="SEMA"/>
    <property type="match status" value="1"/>
</dbReference>
<organism>
    <name type="scientific">Drosophila melanogaster</name>
    <name type="common">Fruit fly</name>
    <dbReference type="NCBI Taxonomy" id="7227"/>
    <lineage>
        <taxon>Eukaryota</taxon>
        <taxon>Metazoa</taxon>
        <taxon>Ecdysozoa</taxon>
        <taxon>Arthropoda</taxon>
        <taxon>Hexapoda</taxon>
        <taxon>Insecta</taxon>
        <taxon>Pterygota</taxon>
        <taxon>Neoptera</taxon>
        <taxon>Endopterygota</taxon>
        <taxon>Diptera</taxon>
        <taxon>Brachycera</taxon>
        <taxon>Muscomorpha</taxon>
        <taxon>Ephydroidea</taxon>
        <taxon>Drosophilidae</taxon>
        <taxon>Drosophila</taxon>
        <taxon>Sophophora</taxon>
    </lineage>
</organism>
<sequence length="724" mass="82998">MSLLQLSPLLALLLLLCSSVSETAADYENTWNFYYERPCCTGNDQGNNNYGKHGADHVREFNCGKLYYRTFHMNEDRDTLYVGAMDRVFRVNLQNISSSNCNRDVINLEPTRDDVVSCVSKGKSQIFDCKNHVRVIQSMDQGDRLYVCGTNAHNPKDYVIYANLTHLPRSEYVIGVGLGIAKCPYDPLDNSTAIYVENGNPGGLPGLYSGTNAEFTKADTVIFRTDLYNTSAKRLEYKFKRTLKYDSKWLDKPNFVGSFDIGEYVYFFFRETAVEYINCGKAVYSRIARVCKKDVGGKNLLAHNWATYLKARLNCSISGEFPFYFNEIQSVYQLPSDKSRFFATFTTSTNGLIGSAVCSFHINEIQAAFNGKFKEQSSSNSAWLPVLNSRVPEPRPGTCVNDTSNLPDTVLNFIRSHPLMDKAVNHEHNNPVYYKRDLVFTKLVVDKIRIDILNQEYIVYYVGTNLGRIYKIVQYYRNGESLSKLLDIFEVAPNEAIQVMEISQTRKSLYIGTDHRIKQIDLAMCNRRYDNCFRCVRDPYCGWDKEANTCRPYELDLLQDVANETSDICDSSVLKKKIVVTYGQSVHLGCFVKIPEVLKNEQVTWYHHSKDKGRYEIRYSPTKYIETTERGLVVVSVNEADGGRYDCHLGGSLLCSYNITVDAHRCTPPNKSNDYQKIYSDWCHEFEKYKTAMKSWEKKQAQCSTRQNFSSNQHPNEIFRKPNV</sequence>
<comment type="function">
    <text evidence="4 6 7 8">Ligand for transmembrane receptor PlexB (PubMed:16672342). Plays a role in growth cone guidance (PubMed:27618755, PubMed:8269517). Required for both proper adult behavior and survival (PubMed:37041188, PubMed:8269517). Can function as a selective target-derived signal that inhibits the formation of specific synaptic terminal arbors (PubMed:8269517). Function in neurons is essential for adult survival, motor neuron survival, and is important for climbing behavior and activity (PubMed:37041188). During embryogenesis, plays an important role in correct salivary gland positioning (PubMed:27618755).</text>
</comment>
<comment type="subunit">
    <text evidence="4">Interacts with PlexB.</text>
</comment>
<comment type="subcellular location">
    <subcellularLocation>
        <location evidence="11">Secreted</location>
    </subcellularLocation>
</comment>
<comment type="alternative products">
    <event type="alternative splicing"/>
    <isoform>
        <id>Q24323-1</id>
        <name>A</name>
        <name>B</name>
        <sequence type="displayed"/>
    </isoform>
    <isoform>
        <id>Q24323-2</id>
        <name>C</name>
        <sequence type="described" ref="VSP_016075"/>
    </isoform>
    <isoform>
        <id>Q24323-3</id>
        <name>D</name>
        <sequence type="described" ref="VSP_016076"/>
    </isoform>
    <isoform>
        <id>Q24323-4</id>
        <name>E</name>
        <sequence type="described" ref="VSP_016077"/>
    </isoform>
</comment>
<comment type="tissue specificity">
    <text evidence="8">Transiently expressed by a single large muscle during motoneuron outgrowth and synapse formation.</text>
</comment>
<comment type="developmental stage">
    <text evidence="6 8">Expression begins around stage 10 in weak epidermal stripes (PubMed:8269517). Nervous system expression is first detected around stage 15 and at stage 16 appears to remain restricted to a small subset of neurons (PubMed:8269517). Beginning around stage 14 to 15, also expressed in the ventral intersegmental 5 (VIS5) muscle of thoracic segment T3 (PubMed:27618755, PubMed:8269517). It is also expressed in the embryonic gonads and in anterior sensory organs, including the maxillary complex (PubMed:8269517).</text>
</comment>
<comment type="disruption phenotype">
    <text evidence="7">RNAi-mediated knockdown in the neurons of adult males, reduces survival to 77 percent (PubMed:37041188). Adult survival begins to decrease from approximately day 9 post eclosion (PubMed:37041188). Pan-neuronal or glutamatergic neuron-specific RNAi-mediated knockdown decreases adult climbing behavior (PubMed:37041188). Glutamatergic neuron-specific RNAi-mediated knockdown also increases activity, at least during the light cycle and results in a significant loss of motor neurons in each thoracic cluster (T1, T2, T3) (PubMed:37041188).</text>
</comment>
<comment type="similarity">
    <text evidence="11">Belongs to the semaphorin family.</text>
</comment>
<proteinExistence type="evidence at protein level"/>
<protein>
    <recommendedName>
        <fullName evidence="12">Semaphorin-2A</fullName>
    </recommendedName>
    <alternativeName>
        <fullName evidence="10">Semaphorin-II</fullName>
        <shortName evidence="10">Sema II</shortName>
    </alternativeName>
</protein>
<evidence type="ECO:0000250" key="1"/>
<evidence type="ECO:0000255" key="2"/>
<evidence type="ECO:0000255" key="3">
    <source>
        <dbReference type="PROSITE-ProRule" id="PRU00352"/>
    </source>
</evidence>
<evidence type="ECO:0000269" key="4">
    <source>
    </source>
</evidence>
<evidence type="ECO:0000269" key="5">
    <source>
    </source>
</evidence>
<evidence type="ECO:0000269" key="6">
    <source>
    </source>
</evidence>
<evidence type="ECO:0000269" key="7">
    <source>
    </source>
</evidence>
<evidence type="ECO:0000269" key="8">
    <source>
    </source>
</evidence>
<evidence type="ECO:0000303" key="9">
    <source>
    </source>
</evidence>
<evidence type="ECO:0000303" key="10">
    <source>
    </source>
</evidence>
<evidence type="ECO:0000305" key="11"/>
<evidence type="ECO:0000312" key="12">
    <source>
        <dbReference type="FlyBase" id="FBgn0011260"/>
    </source>
</evidence>
<evidence type="ECO:0007829" key="13">
    <source>
        <dbReference type="PDB" id="6QP7"/>
    </source>
</evidence>
<name>SEM2A_DROME</name>
<reference key="1">
    <citation type="journal article" date="1993" name="Cell">
        <title>The semaphorin genes encode a family of transmembrane and secreted growth cone guidance molecules.</title>
        <authorList>
            <person name="Kolodkin A.L."/>
            <person name="Matthes D.J."/>
            <person name="Goodman C.S."/>
        </authorList>
    </citation>
    <scope>NUCLEOTIDE SEQUENCE [MRNA] (ISOFORM E)</scope>
    <scope>FUNCTION</scope>
    <scope>TISSUE SPECIFICITY</scope>
    <scope>DEVELOPMENTAL STAGE</scope>
    <source>
        <tissue>Embryo</tissue>
    </source>
</reference>
<reference key="2">
    <citation type="journal article" date="2000" name="Science">
        <title>The genome sequence of Drosophila melanogaster.</title>
        <authorList>
            <person name="Adams M.D."/>
            <person name="Celniker S.E."/>
            <person name="Holt R.A."/>
            <person name="Evans C.A."/>
            <person name="Gocayne J.D."/>
            <person name="Amanatides P.G."/>
            <person name="Scherer S.E."/>
            <person name="Li P.W."/>
            <person name="Hoskins R.A."/>
            <person name="Galle R.F."/>
            <person name="George R.A."/>
            <person name="Lewis S.E."/>
            <person name="Richards S."/>
            <person name="Ashburner M."/>
            <person name="Henderson S.N."/>
            <person name="Sutton G.G."/>
            <person name="Wortman J.R."/>
            <person name="Yandell M.D."/>
            <person name="Zhang Q."/>
            <person name="Chen L.X."/>
            <person name="Brandon R.C."/>
            <person name="Rogers Y.-H.C."/>
            <person name="Blazej R.G."/>
            <person name="Champe M."/>
            <person name="Pfeiffer B.D."/>
            <person name="Wan K.H."/>
            <person name="Doyle C."/>
            <person name="Baxter E.G."/>
            <person name="Helt G."/>
            <person name="Nelson C.R."/>
            <person name="Miklos G.L.G."/>
            <person name="Abril J.F."/>
            <person name="Agbayani A."/>
            <person name="An H.-J."/>
            <person name="Andrews-Pfannkoch C."/>
            <person name="Baldwin D."/>
            <person name="Ballew R.M."/>
            <person name="Basu A."/>
            <person name="Baxendale J."/>
            <person name="Bayraktaroglu L."/>
            <person name="Beasley E.M."/>
            <person name="Beeson K.Y."/>
            <person name="Benos P.V."/>
            <person name="Berman B.P."/>
            <person name="Bhandari D."/>
            <person name="Bolshakov S."/>
            <person name="Borkova D."/>
            <person name="Botchan M.R."/>
            <person name="Bouck J."/>
            <person name="Brokstein P."/>
            <person name="Brottier P."/>
            <person name="Burtis K.C."/>
            <person name="Busam D.A."/>
            <person name="Butler H."/>
            <person name="Cadieu E."/>
            <person name="Center A."/>
            <person name="Chandra I."/>
            <person name="Cherry J.M."/>
            <person name="Cawley S."/>
            <person name="Dahlke C."/>
            <person name="Davenport L.B."/>
            <person name="Davies P."/>
            <person name="de Pablos B."/>
            <person name="Delcher A."/>
            <person name="Deng Z."/>
            <person name="Mays A.D."/>
            <person name="Dew I."/>
            <person name="Dietz S.M."/>
            <person name="Dodson K."/>
            <person name="Doup L.E."/>
            <person name="Downes M."/>
            <person name="Dugan-Rocha S."/>
            <person name="Dunkov B.C."/>
            <person name="Dunn P."/>
            <person name="Durbin K.J."/>
            <person name="Evangelista C.C."/>
            <person name="Ferraz C."/>
            <person name="Ferriera S."/>
            <person name="Fleischmann W."/>
            <person name="Fosler C."/>
            <person name="Gabrielian A.E."/>
            <person name="Garg N.S."/>
            <person name="Gelbart W.M."/>
            <person name="Glasser K."/>
            <person name="Glodek A."/>
            <person name="Gong F."/>
            <person name="Gorrell J.H."/>
            <person name="Gu Z."/>
            <person name="Guan P."/>
            <person name="Harris M."/>
            <person name="Harris N.L."/>
            <person name="Harvey D.A."/>
            <person name="Heiman T.J."/>
            <person name="Hernandez J.R."/>
            <person name="Houck J."/>
            <person name="Hostin D."/>
            <person name="Houston K.A."/>
            <person name="Howland T.J."/>
            <person name="Wei M.-H."/>
            <person name="Ibegwam C."/>
            <person name="Jalali M."/>
            <person name="Kalush F."/>
            <person name="Karpen G.H."/>
            <person name="Ke Z."/>
            <person name="Kennison J.A."/>
            <person name="Ketchum K.A."/>
            <person name="Kimmel B.E."/>
            <person name="Kodira C.D."/>
            <person name="Kraft C.L."/>
            <person name="Kravitz S."/>
            <person name="Kulp D."/>
            <person name="Lai Z."/>
            <person name="Lasko P."/>
            <person name="Lei Y."/>
            <person name="Levitsky A.A."/>
            <person name="Li J.H."/>
            <person name="Li Z."/>
            <person name="Liang Y."/>
            <person name="Lin X."/>
            <person name="Liu X."/>
            <person name="Mattei B."/>
            <person name="McIntosh T.C."/>
            <person name="McLeod M.P."/>
            <person name="McPherson D."/>
            <person name="Merkulov G."/>
            <person name="Milshina N.V."/>
            <person name="Mobarry C."/>
            <person name="Morris J."/>
            <person name="Moshrefi A."/>
            <person name="Mount S.M."/>
            <person name="Moy M."/>
            <person name="Murphy B."/>
            <person name="Murphy L."/>
            <person name="Muzny D.M."/>
            <person name="Nelson D.L."/>
            <person name="Nelson D.R."/>
            <person name="Nelson K.A."/>
            <person name="Nixon K."/>
            <person name="Nusskern D.R."/>
            <person name="Pacleb J.M."/>
            <person name="Palazzolo M."/>
            <person name="Pittman G.S."/>
            <person name="Pan S."/>
            <person name="Pollard J."/>
            <person name="Puri V."/>
            <person name="Reese M.G."/>
            <person name="Reinert K."/>
            <person name="Remington K."/>
            <person name="Saunders R.D.C."/>
            <person name="Scheeler F."/>
            <person name="Shen H."/>
            <person name="Shue B.C."/>
            <person name="Siden-Kiamos I."/>
            <person name="Simpson M."/>
            <person name="Skupski M.P."/>
            <person name="Smith T.J."/>
            <person name="Spier E."/>
            <person name="Spradling A.C."/>
            <person name="Stapleton M."/>
            <person name="Strong R."/>
            <person name="Sun E."/>
            <person name="Svirskas R."/>
            <person name="Tector C."/>
            <person name="Turner R."/>
            <person name="Venter E."/>
            <person name="Wang A.H."/>
            <person name="Wang X."/>
            <person name="Wang Z.-Y."/>
            <person name="Wassarman D.A."/>
            <person name="Weinstock G.M."/>
            <person name="Weissenbach J."/>
            <person name="Williams S.M."/>
            <person name="Woodage T."/>
            <person name="Worley K.C."/>
            <person name="Wu D."/>
            <person name="Yang S."/>
            <person name="Yao Q.A."/>
            <person name="Ye J."/>
            <person name="Yeh R.-F."/>
            <person name="Zaveri J.S."/>
            <person name="Zhan M."/>
            <person name="Zhang G."/>
            <person name="Zhao Q."/>
            <person name="Zheng L."/>
            <person name="Zheng X.H."/>
            <person name="Zhong F.N."/>
            <person name="Zhong W."/>
            <person name="Zhou X."/>
            <person name="Zhu S.C."/>
            <person name="Zhu X."/>
            <person name="Smith H.O."/>
            <person name="Gibbs R.A."/>
            <person name="Myers E.W."/>
            <person name="Rubin G.M."/>
            <person name="Venter J.C."/>
        </authorList>
    </citation>
    <scope>NUCLEOTIDE SEQUENCE [LARGE SCALE GENOMIC DNA]</scope>
    <source>
        <strain>Berkeley</strain>
    </source>
</reference>
<reference key="3">
    <citation type="journal article" date="2002" name="Genome Biol.">
        <title>Annotation of the Drosophila melanogaster euchromatic genome: a systematic review.</title>
        <authorList>
            <person name="Misra S."/>
            <person name="Crosby M.A."/>
            <person name="Mungall C.J."/>
            <person name="Matthews B.B."/>
            <person name="Campbell K.S."/>
            <person name="Hradecky P."/>
            <person name="Huang Y."/>
            <person name="Kaminker J.S."/>
            <person name="Millburn G.H."/>
            <person name="Prochnik S.E."/>
            <person name="Smith C.D."/>
            <person name="Tupy J.L."/>
            <person name="Whitfield E.J."/>
            <person name="Bayraktaroglu L."/>
            <person name="Berman B.P."/>
            <person name="Bettencourt B.R."/>
            <person name="Celniker S.E."/>
            <person name="de Grey A.D.N.J."/>
            <person name="Drysdale R.A."/>
            <person name="Harris N.L."/>
            <person name="Richter J."/>
            <person name="Russo S."/>
            <person name="Schroeder A.J."/>
            <person name="Shu S.Q."/>
            <person name="Stapleton M."/>
            <person name="Yamada C."/>
            <person name="Ashburner M."/>
            <person name="Gelbart W.M."/>
            <person name="Rubin G.M."/>
            <person name="Lewis S.E."/>
        </authorList>
    </citation>
    <scope>GENOME REANNOTATION</scope>
    <scope>ALTERNATIVE SPLICING</scope>
    <source>
        <strain>Berkeley</strain>
    </source>
</reference>
<reference key="4">
    <citation type="journal article" date="2002" name="Genome Biol.">
        <title>A Drosophila full-length cDNA resource.</title>
        <authorList>
            <person name="Stapleton M."/>
            <person name="Carlson J.W."/>
            <person name="Brokstein P."/>
            <person name="Yu C."/>
            <person name="Champe M."/>
            <person name="George R.A."/>
            <person name="Guarin H."/>
            <person name="Kronmiller B."/>
            <person name="Pacleb J.M."/>
            <person name="Park S."/>
            <person name="Wan K.H."/>
            <person name="Rubin G.M."/>
            <person name="Celniker S.E."/>
        </authorList>
    </citation>
    <scope>NUCLEOTIDE SEQUENCE [LARGE SCALE MRNA] (ISOFORM A)</scope>
    <source>
        <strain>Berkeley</strain>
        <tissue>Embryo</tissue>
    </source>
</reference>
<reference key="5">
    <citation type="submission" date="2004-01" db="EMBL/GenBank/DDBJ databases">
        <authorList>
            <person name="Stapleton M."/>
            <person name="Carlson J.W."/>
            <person name="Chavez C."/>
            <person name="Frise E."/>
            <person name="George R.A."/>
            <person name="Pacleb J.M."/>
            <person name="Park S."/>
            <person name="Wan K.H."/>
            <person name="Yu C."/>
            <person name="Rubin G.M."/>
            <person name="Celniker S.E."/>
        </authorList>
    </citation>
    <scope>NUCLEOTIDE SEQUENCE [LARGE SCALE MRNA] (ISOFORM A)</scope>
    <source>
        <strain>Berkeley</strain>
        <tissue>Embryo</tissue>
    </source>
</reference>
<reference key="6">
    <citation type="journal article" date="2006" name="Development">
        <title>Drosophila Plexin B is a Sema-2a receptor required for axon guidance.</title>
        <authorList>
            <person name="Ayoob J.C."/>
            <person name="Terman J.R."/>
            <person name="Kolodkin A.L."/>
        </authorList>
    </citation>
    <scope>FUNCTION</scope>
    <scope>INTERACTION WITH PLEXB</scope>
</reference>
<reference key="7">
    <citation type="journal article" date="2009" name="Nat. Biotechnol.">
        <title>Mass-spectrometric identification and relative quantification of N-linked cell surface glycoproteins.</title>
        <authorList>
            <person name="Wollscheid B."/>
            <person name="Bausch-Fluck D."/>
            <person name="Henderson C."/>
            <person name="O'Brien R."/>
            <person name="Bibel M."/>
            <person name="Schiess R."/>
            <person name="Aebersold R."/>
            <person name="Watts J.D."/>
        </authorList>
    </citation>
    <scope>GLYCOSYLATION [LARGE SCALE ANALYSIS] AT ASN-95</scope>
    <scope>IDENTIFICATION BY MASS SPECTROMETRY</scope>
</reference>
<reference key="8">
    <citation type="journal article" date="2016" name="Dev. Biol.">
        <title>Drosophila FoxL1 non-autonomously coordinates organ placement during embryonic development.</title>
        <authorList>
            <person name="Hanlon C.D."/>
            <person name="Andrew D.J."/>
        </authorList>
    </citation>
    <scope>FUNCTION</scope>
    <scope>DEVELOPMENTAL STAGE</scope>
</reference>
<reference key="9">
    <citation type="journal article" date="2023" name="Sci. Rep.">
        <title>Adult expression of Semaphorins and Plexins is essential for motor neuron survival.</title>
        <authorList>
            <person name="Vaikakkara Chithran A."/>
            <person name="Allan D.W."/>
            <person name="O'Connor T.P."/>
        </authorList>
    </citation>
    <scope>FUNCTION</scope>
    <scope>DISRUPTION PHENOTYPE</scope>
</reference>
<keyword id="KW-0002">3D-structure</keyword>
<keyword id="KW-0025">Alternative splicing</keyword>
<keyword id="KW-0217">Developmental protein</keyword>
<keyword id="KW-0221">Differentiation</keyword>
<keyword id="KW-1015">Disulfide bond</keyword>
<keyword id="KW-0325">Glycoprotein</keyword>
<keyword id="KW-0393">Immunoglobulin domain</keyword>
<keyword id="KW-0524">Neurogenesis</keyword>
<keyword id="KW-1185">Reference proteome</keyword>
<keyword id="KW-0964">Secreted</keyword>
<keyword id="KW-0732">Signal</keyword>